<gene>
    <name type="ordered locus">YJL007C</name>
    <name type="ORF">J1379</name>
</gene>
<proteinExistence type="predicted"/>
<name>YJA7_YEAST</name>
<protein>
    <recommendedName>
        <fullName>Uncharacterized protein YJL007C</fullName>
    </recommendedName>
</protein>
<organism>
    <name type="scientific">Saccharomyces cerevisiae (strain ATCC 204508 / S288c)</name>
    <name type="common">Baker's yeast</name>
    <dbReference type="NCBI Taxonomy" id="559292"/>
    <lineage>
        <taxon>Eukaryota</taxon>
        <taxon>Fungi</taxon>
        <taxon>Dikarya</taxon>
        <taxon>Ascomycota</taxon>
        <taxon>Saccharomycotina</taxon>
        <taxon>Saccharomycetes</taxon>
        <taxon>Saccharomycetales</taxon>
        <taxon>Saccharomycetaceae</taxon>
        <taxon>Saccharomyces</taxon>
    </lineage>
</organism>
<comment type="subcellular location">
    <subcellularLocation>
        <location evidence="2">Membrane</location>
        <topology evidence="2">Single-pass membrane protein</topology>
    </subcellularLocation>
</comment>
<accession>P47080</accession>
<accession>A0A1S0T087</accession>
<keyword id="KW-0472">Membrane</keyword>
<keyword id="KW-1185">Reference proteome</keyword>
<keyword id="KW-0812">Transmembrane</keyword>
<keyword id="KW-1133">Transmembrane helix</keyword>
<reference key="1">
    <citation type="journal article" date="1996" name="EMBO J.">
        <title>Complete nucleotide sequence of Saccharomyces cerevisiae chromosome X.</title>
        <authorList>
            <person name="Galibert F."/>
            <person name="Alexandraki D."/>
            <person name="Baur A."/>
            <person name="Boles E."/>
            <person name="Chalwatzis N."/>
            <person name="Chuat J.-C."/>
            <person name="Coster F."/>
            <person name="Cziepluch C."/>
            <person name="de Haan M."/>
            <person name="Domdey H."/>
            <person name="Durand P."/>
            <person name="Entian K.-D."/>
            <person name="Gatius M."/>
            <person name="Goffeau A."/>
            <person name="Grivell L.A."/>
            <person name="Hennemann A."/>
            <person name="Herbert C.J."/>
            <person name="Heumann K."/>
            <person name="Hilger F."/>
            <person name="Hollenberg C.P."/>
            <person name="Huang M.-E."/>
            <person name="Jacq C."/>
            <person name="Jauniaux J.-C."/>
            <person name="Katsoulou C."/>
            <person name="Kirchrath L."/>
            <person name="Kleine K."/>
            <person name="Kordes E."/>
            <person name="Koetter P."/>
            <person name="Liebl S."/>
            <person name="Louis E.J."/>
            <person name="Manus V."/>
            <person name="Mewes H.-W."/>
            <person name="Miosga T."/>
            <person name="Obermaier B."/>
            <person name="Perea J."/>
            <person name="Pohl T.M."/>
            <person name="Portetelle D."/>
            <person name="Pujol A."/>
            <person name="Purnelle B."/>
            <person name="Ramezani Rad M."/>
            <person name="Rasmussen S.W."/>
            <person name="Rose M."/>
            <person name="Rossau R."/>
            <person name="Schaaff-Gerstenschlaeger I."/>
            <person name="Smits P.H.M."/>
            <person name="Scarcez T."/>
            <person name="Soriano N."/>
            <person name="To Van D."/>
            <person name="Tzermia M."/>
            <person name="Van Broekhoven A."/>
            <person name="Vandenbol M."/>
            <person name="Wedler H."/>
            <person name="von Wettstein D."/>
            <person name="Wambutt R."/>
            <person name="Zagulski M."/>
            <person name="Zollner A."/>
            <person name="Karpfinger-Hartl L."/>
        </authorList>
    </citation>
    <scope>NUCLEOTIDE SEQUENCE [LARGE SCALE GENOMIC DNA]</scope>
    <source>
        <strain>ATCC 204508 / S288c</strain>
    </source>
</reference>
<reference key="2">
    <citation type="journal article" date="2014" name="G3 (Bethesda)">
        <title>The reference genome sequence of Saccharomyces cerevisiae: Then and now.</title>
        <authorList>
            <person name="Engel S.R."/>
            <person name="Dietrich F.S."/>
            <person name="Fisk D.G."/>
            <person name="Binkley G."/>
            <person name="Balakrishnan R."/>
            <person name="Costanzo M.C."/>
            <person name="Dwight S.S."/>
            <person name="Hitz B.C."/>
            <person name="Karra K."/>
            <person name="Nash R.S."/>
            <person name="Weng S."/>
            <person name="Wong E.D."/>
            <person name="Lloyd P."/>
            <person name="Skrzypek M.S."/>
            <person name="Miyasato S.R."/>
            <person name="Simison M."/>
            <person name="Cherry J.M."/>
        </authorList>
    </citation>
    <scope>GENOME REANNOTATION</scope>
    <source>
        <strain>ATCC 204508 / S288c</strain>
    </source>
</reference>
<reference key="3">
    <citation type="journal article" date="2007" name="Genome Res.">
        <title>Approaching a complete repository of sequence-verified protein-encoding clones for Saccharomyces cerevisiae.</title>
        <authorList>
            <person name="Hu Y."/>
            <person name="Rolfs A."/>
            <person name="Bhullar B."/>
            <person name="Murthy T.V.S."/>
            <person name="Zhu C."/>
            <person name="Berger M.F."/>
            <person name="Camargo A.A."/>
            <person name="Kelley F."/>
            <person name="McCarron S."/>
            <person name="Jepson D."/>
            <person name="Richardson A."/>
            <person name="Raphael J."/>
            <person name="Moreira D."/>
            <person name="Taycher E."/>
            <person name="Zuo D."/>
            <person name="Mohr S."/>
            <person name="Kane M.F."/>
            <person name="Williamson J."/>
            <person name="Simpson A.J.G."/>
            <person name="Bulyk M.L."/>
            <person name="Harlow E."/>
            <person name="Marsischky G."/>
            <person name="Kolodner R.D."/>
            <person name="LaBaer J."/>
        </authorList>
    </citation>
    <scope>NUCLEOTIDE SEQUENCE [GENOMIC DNA]</scope>
    <source>
        <strain>ATCC 204508 / S288c</strain>
    </source>
</reference>
<evidence type="ECO:0000255" key="1"/>
<evidence type="ECO:0000305" key="2"/>
<feature type="chain" id="PRO_0000203079" description="Uncharacterized protein YJL007C">
    <location>
        <begin position="1"/>
        <end position="104"/>
    </location>
</feature>
<feature type="transmembrane region" description="Helical" evidence="1">
    <location>
        <begin position="72"/>
        <end position="92"/>
    </location>
</feature>
<dbReference type="EMBL" id="Z49282">
    <property type="protein sequence ID" value="CAA89298.1"/>
    <property type="molecule type" value="Genomic_DNA"/>
</dbReference>
<dbReference type="EMBL" id="AY558242">
    <property type="protein sequence ID" value="AAS56568.1"/>
    <property type="molecule type" value="Genomic_DNA"/>
</dbReference>
<dbReference type="EMBL" id="BK006943">
    <property type="protein sequence ID" value="DAA80307.1"/>
    <property type="molecule type" value="Genomic_DNA"/>
</dbReference>
<dbReference type="PIR" id="S56778">
    <property type="entry name" value="S56778"/>
</dbReference>
<dbReference type="RefSeq" id="NP_001335787.1">
    <property type="nucleotide sequence ID" value="NM_001348847.1"/>
</dbReference>
<dbReference type="SMR" id="P47080"/>
<dbReference type="FunCoup" id="P47080">
    <property type="interactions" value="17"/>
</dbReference>
<dbReference type="IntAct" id="P47080">
    <property type="interactions" value="1"/>
</dbReference>
<dbReference type="STRING" id="4932.YJL007C"/>
<dbReference type="PaxDb" id="4932-YJL007C"/>
<dbReference type="EnsemblFungi" id="YJL007C_mRNA">
    <property type="protein sequence ID" value="YJL007C"/>
    <property type="gene ID" value="YJL007C"/>
</dbReference>
<dbReference type="GeneID" id="853449"/>
<dbReference type="AGR" id="SGD:S000003544"/>
<dbReference type="SGD" id="S000003544">
    <property type="gene designation" value="YJL007C"/>
</dbReference>
<dbReference type="HOGENOM" id="CLU_2279648_0_0_1"/>
<dbReference type="InParanoid" id="P47080"/>
<dbReference type="PRO" id="PR:P47080"/>
<dbReference type="Proteomes" id="UP000002311">
    <property type="component" value="Chromosome X"/>
</dbReference>
<dbReference type="RNAct" id="P47080">
    <property type="molecule type" value="protein"/>
</dbReference>
<dbReference type="GO" id="GO:0016020">
    <property type="term" value="C:membrane"/>
    <property type="evidence" value="ECO:0007669"/>
    <property type="project" value="UniProtKB-SubCell"/>
</dbReference>
<dbReference type="AntiFam" id="ANF00011">
    <property type="entry name" value="tRNA translation"/>
</dbReference>
<sequence>MCSRGGSNSRPSDYETDALPTELLKHTKDVGEEKQTLHQIFADSMVIKGYSTGYTGHTRSSPGDLVIHKRELIFSHNIVIIVSPIYMISFIILLHYQSWHFSIY</sequence>